<protein>
    <recommendedName>
        <fullName evidence="2">Small ribosomal subunit protein uS12</fullName>
    </recommendedName>
    <alternativeName>
        <fullName evidence="3">30S ribosomal protein S12</fullName>
    </alternativeName>
</protein>
<comment type="function">
    <text evidence="2">With S4 and S5 plays an important role in translational accuracy.</text>
</comment>
<comment type="function">
    <text evidence="2">Interacts with and stabilizes bases of the 16S rRNA that are involved in tRNA selection in the A site and with the mRNA backbone. Located at the interface of the 30S and 50S subunits, it traverses the body of the 30S subunit contacting proteins on the other side and probably holding the rRNA structure together. The combined cluster of proteins S8, S12 and S17 appears to hold together the shoulder and platform of the 30S subunit.</text>
</comment>
<comment type="subunit">
    <text evidence="2">Part of the 30S ribosomal subunit. Contacts proteins S8 and S17. May interact with IF1 in the 30S initiation complex.</text>
</comment>
<comment type="similarity">
    <text evidence="2">Belongs to the universal ribosomal protein uS12 family.</text>
</comment>
<accession>B7HQT9</accession>
<reference key="1">
    <citation type="submission" date="2008-10" db="EMBL/GenBank/DDBJ databases">
        <title>Genome sequence of Bacillus cereus AH187.</title>
        <authorList>
            <person name="Dodson R.J."/>
            <person name="Durkin A.S."/>
            <person name="Rosovitz M.J."/>
            <person name="Rasko D.A."/>
            <person name="Kolsto A.B."/>
            <person name="Okstad O.A."/>
            <person name="Ravel J."/>
            <person name="Sutton G."/>
        </authorList>
    </citation>
    <scope>NUCLEOTIDE SEQUENCE [LARGE SCALE GENOMIC DNA]</scope>
    <source>
        <strain>AH187</strain>
    </source>
</reference>
<proteinExistence type="inferred from homology"/>
<keyword id="KW-0488">Methylation</keyword>
<keyword id="KW-0687">Ribonucleoprotein</keyword>
<keyword id="KW-0689">Ribosomal protein</keyword>
<keyword id="KW-0694">RNA-binding</keyword>
<keyword id="KW-0699">rRNA-binding</keyword>
<keyword id="KW-0820">tRNA-binding</keyword>
<name>RS12_BACC7</name>
<dbReference type="EMBL" id="CP001177">
    <property type="protein sequence ID" value="ACJ82380.1"/>
    <property type="molecule type" value="Genomic_DNA"/>
</dbReference>
<dbReference type="SMR" id="B7HQT9"/>
<dbReference type="KEGG" id="bcr:BCAH187_A0136"/>
<dbReference type="HOGENOM" id="CLU_104295_1_2_9"/>
<dbReference type="Proteomes" id="UP000002214">
    <property type="component" value="Chromosome"/>
</dbReference>
<dbReference type="GO" id="GO:0015935">
    <property type="term" value="C:small ribosomal subunit"/>
    <property type="evidence" value="ECO:0007669"/>
    <property type="project" value="InterPro"/>
</dbReference>
<dbReference type="GO" id="GO:0019843">
    <property type="term" value="F:rRNA binding"/>
    <property type="evidence" value="ECO:0007669"/>
    <property type="project" value="UniProtKB-UniRule"/>
</dbReference>
<dbReference type="GO" id="GO:0003735">
    <property type="term" value="F:structural constituent of ribosome"/>
    <property type="evidence" value="ECO:0007669"/>
    <property type="project" value="InterPro"/>
</dbReference>
<dbReference type="GO" id="GO:0000049">
    <property type="term" value="F:tRNA binding"/>
    <property type="evidence" value="ECO:0007669"/>
    <property type="project" value="UniProtKB-UniRule"/>
</dbReference>
<dbReference type="GO" id="GO:0006412">
    <property type="term" value="P:translation"/>
    <property type="evidence" value="ECO:0007669"/>
    <property type="project" value="UniProtKB-UniRule"/>
</dbReference>
<dbReference type="CDD" id="cd03368">
    <property type="entry name" value="Ribosomal_S12"/>
    <property type="match status" value="1"/>
</dbReference>
<dbReference type="FunFam" id="2.40.50.140:FF:000001">
    <property type="entry name" value="30S ribosomal protein S12"/>
    <property type="match status" value="1"/>
</dbReference>
<dbReference type="Gene3D" id="2.40.50.140">
    <property type="entry name" value="Nucleic acid-binding proteins"/>
    <property type="match status" value="1"/>
</dbReference>
<dbReference type="HAMAP" id="MF_00403_B">
    <property type="entry name" value="Ribosomal_uS12_B"/>
    <property type="match status" value="1"/>
</dbReference>
<dbReference type="InterPro" id="IPR012340">
    <property type="entry name" value="NA-bd_OB-fold"/>
</dbReference>
<dbReference type="InterPro" id="IPR006032">
    <property type="entry name" value="Ribosomal_uS12"/>
</dbReference>
<dbReference type="InterPro" id="IPR005679">
    <property type="entry name" value="Ribosomal_uS12_bac"/>
</dbReference>
<dbReference type="NCBIfam" id="TIGR00981">
    <property type="entry name" value="rpsL_bact"/>
    <property type="match status" value="1"/>
</dbReference>
<dbReference type="PANTHER" id="PTHR11652">
    <property type="entry name" value="30S RIBOSOMAL PROTEIN S12 FAMILY MEMBER"/>
    <property type="match status" value="1"/>
</dbReference>
<dbReference type="Pfam" id="PF00164">
    <property type="entry name" value="Ribosom_S12_S23"/>
    <property type="match status" value="1"/>
</dbReference>
<dbReference type="PRINTS" id="PR01034">
    <property type="entry name" value="RIBOSOMALS12"/>
</dbReference>
<dbReference type="SUPFAM" id="SSF50249">
    <property type="entry name" value="Nucleic acid-binding proteins"/>
    <property type="match status" value="1"/>
</dbReference>
<dbReference type="PROSITE" id="PS00055">
    <property type="entry name" value="RIBOSOMAL_S12"/>
    <property type="match status" value="1"/>
</dbReference>
<feature type="chain" id="PRO_1000194123" description="Small ribosomal subunit protein uS12">
    <location>
        <begin position="1"/>
        <end position="140"/>
    </location>
</feature>
<feature type="modified residue" description="3-methylthioaspartic acid" evidence="1">
    <location>
        <position position="102"/>
    </location>
</feature>
<sequence length="140" mass="15446">MPTINQLVRNGRTDKVWKSKSPALNKGFNSLKKKSTDISAPQKRGVCTRVGTMTPKKPNSALRKYARVRLTNGIEVTAYIPGIGHNLQEHSVVLIRGGRVKDLPGVRYHIVRGALDTAGVDKRMQGRSKYGTKKPKAAKK</sequence>
<evidence type="ECO:0000250" key="1"/>
<evidence type="ECO:0000255" key="2">
    <source>
        <dbReference type="HAMAP-Rule" id="MF_00403"/>
    </source>
</evidence>
<evidence type="ECO:0000305" key="3"/>
<organism>
    <name type="scientific">Bacillus cereus (strain AH187)</name>
    <dbReference type="NCBI Taxonomy" id="405534"/>
    <lineage>
        <taxon>Bacteria</taxon>
        <taxon>Bacillati</taxon>
        <taxon>Bacillota</taxon>
        <taxon>Bacilli</taxon>
        <taxon>Bacillales</taxon>
        <taxon>Bacillaceae</taxon>
        <taxon>Bacillus</taxon>
        <taxon>Bacillus cereus group</taxon>
    </lineage>
</organism>
<gene>
    <name evidence="2" type="primary">rpsL</name>
    <name type="ordered locus">BCAH187_A0136</name>
</gene>